<sequence>MRILFLIAFMYGCVHPYVNADEIKCPNLNIVTSSGEFRCTGCVKFMPNFSYMYWLAKDMRSDEDAKFIEHLGEGIKEDETVSTIDGRIVTLQKVLHVTDTNKFDNYRFTCVLTTIDGVSKKNIWLK</sequence>
<name>IL18B_VACCW</name>
<organismHost>
    <name type="scientific">Bos taurus</name>
    <name type="common">Bovine</name>
    <dbReference type="NCBI Taxonomy" id="9913"/>
</organismHost>
<dbReference type="EMBL" id="M22812">
    <property type="protein sequence ID" value="AAA69593.1"/>
    <property type="status" value="ALT_SEQ"/>
    <property type="molecule type" value="Genomic_DNA"/>
</dbReference>
<dbReference type="EMBL" id="AY243312">
    <property type="protein sequence ID" value="AAO89292.1"/>
    <property type="molecule type" value="Genomic_DNA"/>
</dbReference>
<dbReference type="PIR" id="B31829">
    <property type="entry name" value="WZVZA2"/>
</dbReference>
<dbReference type="RefSeq" id="YP_232895.1">
    <property type="nucleotide sequence ID" value="NC_006998.1"/>
</dbReference>
<dbReference type="SMR" id="P17357"/>
<dbReference type="DNASU" id="3707628"/>
<dbReference type="GeneID" id="3707628"/>
<dbReference type="KEGG" id="vg:3707628"/>
<dbReference type="Proteomes" id="UP000000344">
    <property type="component" value="Genome"/>
</dbReference>
<dbReference type="GO" id="GO:0005615">
    <property type="term" value="C:extracellular space"/>
    <property type="evidence" value="ECO:0000314"/>
    <property type="project" value="UniProt"/>
</dbReference>
<dbReference type="Gene3D" id="2.60.40.10">
    <property type="entry name" value="Immunoglobulins"/>
    <property type="match status" value="1"/>
</dbReference>
<dbReference type="InterPro" id="IPR013783">
    <property type="entry name" value="Ig-like_fold"/>
</dbReference>
<dbReference type="InterPro" id="IPR008791">
    <property type="entry name" value="Orthopox_IL18-bd"/>
</dbReference>
<dbReference type="Pfam" id="PF05566">
    <property type="entry name" value="Pox_vIL-18BP"/>
    <property type="match status" value="1"/>
</dbReference>
<proteinExistence type="inferred from homology"/>
<protein>
    <recommendedName>
        <fullName>Interleukin-18-binding protein</fullName>
        <shortName>vIL-18BP</shortName>
    </recommendedName>
</protein>
<comment type="function">
    <text evidence="2">Soluble IL18-binding protein that may modulate the host antiviral response.</text>
</comment>
<comment type="subcellular location">
    <subcellularLocation>
        <location evidence="3">Secreted</location>
    </subcellularLocation>
</comment>
<comment type="similarity">
    <text evidence="3">Belongs to the orthopoxvirus OPG022 family.</text>
</comment>
<comment type="sequence caution" evidence="3">
    <conflict type="miscellaneous discrepancy">
        <sequence resource="EMBL-CDS" id="AAA69593"/>
    </conflict>
    <text>Truncated.</text>
</comment>
<feature type="signal peptide" evidence="1">
    <location>
        <begin position="1"/>
        <end position="20"/>
    </location>
</feature>
<feature type="chain" id="PRO_0000099740" description="Interleukin-18-binding protein">
    <location>
        <begin position="21"/>
        <end position="126"/>
    </location>
</feature>
<gene>
    <name type="primary">OPG022</name>
    <name type="ORF">VACWR013</name>
</gene>
<organism>
    <name type="scientific">Vaccinia virus (strain Western Reserve)</name>
    <name type="common">VACV</name>
    <name type="synonym">Vaccinia virus (strain WR)</name>
    <dbReference type="NCBI Taxonomy" id="10254"/>
    <lineage>
        <taxon>Viruses</taxon>
        <taxon>Varidnaviria</taxon>
        <taxon>Bamfordvirae</taxon>
        <taxon>Nucleocytoviricota</taxon>
        <taxon>Pokkesviricetes</taxon>
        <taxon>Chitovirales</taxon>
        <taxon>Poxviridae</taxon>
        <taxon>Chordopoxvirinae</taxon>
        <taxon>Orthopoxvirus</taxon>
        <taxon>Vaccinia virus</taxon>
    </lineage>
</organism>
<reference key="1">
    <citation type="journal article" date="1988" name="Virology">
        <title>Analysis of a large cluster of nonessential genes deleted from a vaccinia virus terminal transposition mutant.</title>
        <authorList>
            <person name="Kotwal G.J."/>
            <person name="Moss B."/>
        </authorList>
    </citation>
    <scope>NUCLEOTIDE SEQUENCE [GENOMIC DNA]</scope>
</reference>
<reference key="2">
    <citation type="submission" date="2003-02" db="EMBL/GenBank/DDBJ databases">
        <title>Sequencing of the coding region of Vaccinia-WR to an average 9-fold redundancy and an error rate of 0.16/10kb.</title>
        <authorList>
            <person name="Esposito J.J."/>
            <person name="Frace A.M."/>
            <person name="Sammons S.A."/>
            <person name="Olsen-Rasmussen M."/>
            <person name="Osborne J."/>
            <person name="Wohlhueter R."/>
        </authorList>
    </citation>
    <scope>NUCLEOTIDE SEQUENCE [LARGE SCALE GENOMIC DNA]</scope>
</reference>
<reference key="3">
    <citation type="journal article" date="2000" name="J. Gen. Virol.">
        <title>Ectromelia, vaccinia and cowpox viruses encode secreted interleukin-18-binding proteins.</title>
        <authorList>
            <person name="Smith V.P."/>
            <person name="Bryant N.A."/>
            <person name="Alcami A."/>
        </authorList>
    </citation>
    <scope>FUNCTION</scope>
    <source>
        <strain>Lister</strain>
    </source>
</reference>
<keyword id="KW-0244">Early protein</keyword>
<keyword id="KW-0945">Host-virus interaction</keyword>
<keyword id="KW-1185">Reference proteome</keyword>
<keyword id="KW-0964">Secreted</keyword>
<keyword id="KW-0732">Signal</keyword>
<keyword id="KW-0899">Viral immunoevasion</keyword>
<accession>P17357</accession>
<accession>Q80HY7</accession>
<evidence type="ECO:0000255" key="1"/>
<evidence type="ECO:0000269" key="2">
    <source>
    </source>
</evidence>
<evidence type="ECO:0000305" key="3"/>